<comment type="function">
    <text evidence="1">Produces ATP from ADP in the presence of a proton gradient across the membrane. The gamma chain is believed to be important in regulating ATPase activity and the flow of protons through the CF(0) complex.</text>
</comment>
<comment type="subunit">
    <text evidence="1">F-type ATPases have 2 components, CF(1) - the catalytic core - and CF(0) - the membrane proton channel. CF(1) has five subunits: alpha(3), beta(3), gamma(1), delta(1), epsilon(1). CF(0) has three main subunits: a, b and c.</text>
</comment>
<comment type="subcellular location">
    <subcellularLocation>
        <location evidence="1">Cell membrane</location>
        <topology evidence="1">Peripheral membrane protein</topology>
    </subcellularLocation>
</comment>
<comment type="similarity">
    <text evidence="1">Belongs to the ATPase gamma chain family.</text>
</comment>
<name>ATPG_LACLA</name>
<organism>
    <name type="scientific">Lactococcus lactis subsp. lactis (strain IL1403)</name>
    <name type="common">Streptococcus lactis</name>
    <dbReference type="NCBI Taxonomy" id="272623"/>
    <lineage>
        <taxon>Bacteria</taxon>
        <taxon>Bacillati</taxon>
        <taxon>Bacillota</taxon>
        <taxon>Bacilli</taxon>
        <taxon>Lactobacillales</taxon>
        <taxon>Streptococcaceae</taxon>
        <taxon>Lactococcus</taxon>
    </lineage>
</organism>
<evidence type="ECO:0000255" key="1">
    <source>
        <dbReference type="HAMAP-Rule" id="MF_00815"/>
    </source>
</evidence>
<protein>
    <recommendedName>
        <fullName evidence="1">ATP synthase gamma chain</fullName>
    </recommendedName>
    <alternativeName>
        <fullName evidence="1">ATP synthase F1 sector gamma subunit</fullName>
    </alternativeName>
    <alternativeName>
        <fullName evidence="1">F-ATPase gamma subunit</fullName>
    </alternativeName>
</protein>
<reference key="1">
    <citation type="submission" date="2001-06" db="EMBL/GenBank/DDBJ databases">
        <title>Sequence of the atp operon from Lactococcus lactis subsp. lactis CHCC373.</title>
        <authorList>
            <person name="Pedersen M.B."/>
            <person name="Kragelund L."/>
            <person name="Jensen P.R."/>
            <person name="Nilsson D."/>
        </authorList>
    </citation>
    <scope>NUCLEOTIDE SEQUENCE [GENOMIC DNA]</scope>
    <source>
        <strain>CHCC373</strain>
    </source>
</reference>
<reference key="2">
    <citation type="journal article" date="2001" name="Genome Res.">
        <title>The complete genome sequence of the lactic acid bacterium Lactococcus lactis ssp. lactis IL1403.</title>
        <authorList>
            <person name="Bolotin A."/>
            <person name="Wincker P."/>
            <person name="Mauger S."/>
            <person name="Jaillon O."/>
            <person name="Malarme K."/>
            <person name="Weissenbach J."/>
            <person name="Ehrlich S.D."/>
            <person name="Sorokin A."/>
        </authorList>
    </citation>
    <scope>NUCLEOTIDE SEQUENCE [LARGE SCALE GENOMIC DNA]</scope>
    <source>
        <strain>IL1403</strain>
    </source>
</reference>
<feature type="chain" id="PRO_0000073302" description="ATP synthase gamma chain">
    <location>
        <begin position="1"/>
        <end position="289"/>
    </location>
</feature>
<proteinExistence type="inferred from homology"/>
<keyword id="KW-0066">ATP synthesis</keyword>
<keyword id="KW-1003">Cell membrane</keyword>
<keyword id="KW-0139">CF(1)</keyword>
<keyword id="KW-0375">Hydrogen ion transport</keyword>
<keyword id="KW-0406">Ion transport</keyword>
<keyword id="KW-0472">Membrane</keyword>
<keyword id="KW-1185">Reference proteome</keyword>
<keyword id="KW-0813">Transport</keyword>
<sequence>MGASLNEIKTKIASTKKTSQITGAMQMVSAAKLQKAESHAKAFQIYAEKVRKITTDLVSSDKEPAKNPMMIKREVKKTGYLVITSDRGLVGGYNSNILKSVMNTIRKRHANESEYTILALGGTGADFFKARNVKVSYVLRGLSDQPTFEEVRAIVTEAVTEYQAEEFDELYVCYNHHVNSLVSDARMEKMLPISFEESGQQKPSLETFELEPDRETILNQLLPQYAESMIYGSIVDAKTAEHAAGMTAMRTATDNAHSVINDLTIQYNRARQASITQEITEIVAGASAL</sequence>
<gene>
    <name evidence="1" type="primary">atpG</name>
    <name type="ordered locus">LL1765</name>
    <name type="ORF">L8105</name>
</gene>
<dbReference type="EMBL" id="AF393838">
    <property type="protein sequence ID" value="AAK84018.1"/>
    <property type="molecule type" value="Genomic_DNA"/>
</dbReference>
<dbReference type="EMBL" id="AE005176">
    <property type="protein sequence ID" value="AAK05863.1"/>
    <property type="molecule type" value="Genomic_DNA"/>
</dbReference>
<dbReference type="PIR" id="E86845">
    <property type="entry name" value="E86845"/>
</dbReference>
<dbReference type="RefSeq" id="NP_267921.1">
    <property type="nucleotide sequence ID" value="NC_002662.1"/>
</dbReference>
<dbReference type="RefSeq" id="WP_004255268.1">
    <property type="nucleotide sequence ID" value="NC_002662.1"/>
</dbReference>
<dbReference type="SMR" id="Q9CER9"/>
<dbReference type="PaxDb" id="272623-L8105"/>
<dbReference type="EnsemblBacteria" id="AAK05863">
    <property type="protein sequence ID" value="AAK05863"/>
    <property type="gene ID" value="L8105"/>
</dbReference>
<dbReference type="KEGG" id="lla:L8105"/>
<dbReference type="PATRIC" id="fig|272623.7.peg.1892"/>
<dbReference type="eggNOG" id="COG0224">
    <property type="taxonomic scope" value="Bacteria"/>
</dbReference>
<dbReference type="HOGENOM" id="CLU_050669_0_1_9"/>
<dbReference type="OrthoDB" id="9812769at2"/>
<dbReference type="Proteomes" id="UP000002196">
    <property type="component" value="Chromosome"/>
</dbReference>
<dbReference type="GO" id="GO:0005886">
    <property type="term" value="C:plasma membrane"/>
    <property type="evidence" value="ECO:0007669"/>
    <property type="project" value="UniProtKB-SubCell"/>
</dbReference>
<dbReference type="GO" id="GO:0045259">
    <property type="term" value="C:proton-transporting ATP synthase complex"/>
    <property type="evidence" value="ECO:0007669"/>
    <property type="project" value="UniProtKB-KW"/>
</dbReference>
<dbReference type="GO" id="GO:0005524">
    <property type="term" value="F:ATP binding"/>
    <property type="evidence" value="ECO:0007669"/>
    <property type="project" value="UniProtKB-UniRule"/>
</dbReference>
<dbReference type="GO" id="GO:0046933">
    <property type="term" value="F:proton-transporting ATP synthase activity, rotational mechanism"/>
    <property type="evidence" value="ECO:0007669"/>
    <property type="project" value="UniProtKB-UniRule"/>
</dbReference>
<dbReference type="GO" id="GO:0042777">
    <property type="term" value="P:proton motive force-driven plasma membrane ATP synthesis"/>
    <property type="evidence" value="ECO:0007669"/>
    <property type="project" value="UniProtKB-UniRule"/>
</dbReference>
<dbReference type="CDD" id="cd12151">
    <property type="entry name" value="F1-ATPase_gamma"/>
    <property type="match status" value="1"/>
</dbReference>
<dbReference type="FunFam" id="3.40.1380.10:FF:000002">
    <property type="entry name" value="ATP synthase gamma chain"/>
    <property type="match status" value="1"/>
</dbReference>
<dbReference type="Gene3D" id="3.40.1380.10">
    <property type="match status" value="1"/>
</dbReference>
<dbReference type="Gene3D" id="1.10.287.80">
    <property type="entry name" value="ATP synthase, gamma subunit, helix hairpin domain"/>
    <property type="match status" value="1"/>
</dbReference>
<dbReference type="HAMAP" id="MF_00815">
    <property type="entry name" value="ATP_synth_gamma_bact"/>
    <property type="match status" value="1"/>
</dbReference>
<dbReference type="InterPro" id="IPR035968">
    <property type="entry name" value="ATP_synth_F1_ATPase_gsu"/>
</dbReference>
<dbReference type="InterPro" id="IPR000131">
    <property type="entry name" value="ATP_synth_F1_gsu"/>
</dbReference>
<dbReference type="InterPro" id="IPR023632">
    <property type="entry name" value="ATP_synth_F1_gsu_CS"/>
</dbReference>
<dbReference type="NCBIfam" id="TIGR01146">
    <property type="entry name" value="ATPsyn_F1gamma"/>
    <property type="match status" value="1"/>
</dbReference>
<dbReference type="NCBIfam" id="NF004147">
    <property type="entry name" value="PRK05621.2-1"/>
    <property type="match status" value="1"/>
</dbReference>
<dbReference type="PANTHER" id="PTHR11693">
    <property type="entry name" value="ATP SYNTHASE GAMMA CHAIN"/>
    <property type="match status" value="1"/>
</dbReference>
<dbReference type="PANTHER" id="PTHR11693:SF22">
    <property type="entry name" value="ATP SYNTHASE SUBUNIT GAMMA, MITOCHONDRIAL"/>
    <property type="match status" value="1"/>
</dbReference>
<dbReference type="Pfam" id="PF00231">
    <property type="entry name" value="ATP-synt"/>
    <property type="match status" value="1"/>
</dbReference>
<dbReference type="PRINTS" id="PR00126">
    <property type="entry name" value="ATPASEGAMMA"/>
</dbReference>
<dbReference type="SUPFAM" id="SSF52943">
    <property type="entry name" value="ATP synthase (F1-ATPase), gamma subunit"/>
    <property type="match status" value="1"/>
</dbReference>
<dbReference type="PROSITE" id="PS00153">
    <property type="entry name" value="ATPASE_GAMMA"/>
    <property type="match status" value="1"/>
</dbReference>
<accession>Q9CER9</accession>